<reference key="1">
    <citation type="submission" date="2006-08" db="EMBL/GenBank/DDBJ databases">
        <title>Complete sequence of Maricaulis maris MCS10.</title>
        <authorList>
            <consortium name="US DOE Joint Genome Institute"/>
            <person name="Copeland A."/>
            <person name="Lucas S."/>
            <person name="Lapidus A."/>
            <person name="Barry K."/>
            <person name="Detter J.C."/>
            <person name="Glavina del Rio T."/>
            <person name="Hammon N."/>
            <person name="Israni S."/>
            <person name="Dalin E."/>
            <person name="Tice H."/>
            <person name="Pitluck S."/>
            <person name="Saunders E."/>
            <person name="Brettin T."/>
            <person name="Bruce D."/>
            <person name="Han C."/>
            <person name="Tapia R."/>
            <person name="Gilna P."/>
            <person name="Schmutz J."/>
            <person name="Larimer F."/>
            <person name="Land M."/>
            <person name="Hauser L."/>
            <person name="Kyrpides N."/>
            <person name="Mikhailova N."/>
            <person name="Viollier P."/>
            <person name="Stephens C."/>
            <person name="Richardson P."/>
        </authorList>
    </citation>
    <scope>NUCLEOTIDE SEQUENCE [LARGE SCALE GENOMIC DNA]</scope>
    <source>
        <strain>MCS10</strain>
    </source>
</reference>
<name>Y2939_MARMM</name>
<accession>Q0AKH3</accession>
<comment type="similarity">
    <text evidence="1">Belongs to the UPF0434 family.</text>
</comment>
<dbReference type="EMBL" id="CP000449">
    <property type="protein sequence ID" value="ABI67220.1"/>
    <property type="molecule type" value="Genomic_DNA"/>
</dbReference>
<dbReference type="RefSeq" id="WP_011644864.1">
    <property type="nucleotide sequence ID" value="NC_008347.1"/>
</dbReference>
<dbReference type="SMR" id="Q0AKH3"/>
<dbReference type="STRING" id="394221.Mmar10_2939"/>
<dbReference type="KEGG" id="mmr:Mmar10_2939"/>
<dbReference type="eggNOG" id="COG2835">
    <property type="taxonomic scope" value="Bacteria"/>
</dbReference>
<dbReference type="HOGENOM" id="CLU_155659_2_0_5"/>
<dbReference type="OrthoDB" id="9812205at2"/>
<dbReference type="Proteomes" id="UP000001964">
    <property type="component" value="Chromosome"/>
</dbReference>
<dbReference type="GO" id="GO:0005829">
    <property type="term" value="C:cytosol"/>
    <property type="evidence" value="ECO:0007669"/>
    <property type="project" value="TreeGrafter"/>
</dbReference>
<dbReference type="FunFam" id="2.20.25.10:FF:000002">
    <property type="entry name" value="UPF0434 protein YcaR"/>
    <property type="match status" value="1"/>
</dbReference>
<dbReference type="Gene3D" id="2.20.25.10">
    <property type="match status" value="1"/>
</dbReference>
<dbReference type="HAMAP" id="MF_01187">
    <property type="entry name" value="UPF0434"/>
    <property type="match status" value="1"/>
</dbReference>
<dbReference type="InterPro" id="IPR005651">
    <property type="entry name" value="Trm112-like"/>
</dbReference>
<dbReference type="PANTHER" id="PTHR33505:SF4">
    <property type="entry name" value="PROTEIN PREY, MITOCHONDRIAL"/>
    <property type="match status" value="1"/>
</dbReference>
<dbReference type="PANTHER" id="PTHR33505">
    <property type="entry name" value="ZGC:162634"/>
    <property type="match status" value="1"/>
</dbReference>
<dbReference type="Pfam" id="PF03966">
    <property type="entry name" value="Trm112p"/>
    <property type="match status" value="1"/>
</dbReference>
<dbReference type="SUPFAM" id="SSF158997">
    <property type="entry name" value="Trm112p-like"/>
    <property type="match status" value="1"/>
</dbReference>
<sequence length="63" mass="7138">MSDTQTRDVDPKLLEILVCPVTRETLRYDREAHELISEGAGLAYPVRDGIPIMLPDEARQLDD</sequence>
<feature type="chain" id="PRO_0000291109" description="UPF0434 protein Mmar10_2939">
    <location>
        <begin position="1"/>
        <end position="63"/>
    </location>
</feature>
<evidence type="ECO:0000255" key="1">
    <source>
        <dbReference type="HAMAP-Rule" id="MF_01187"/>
    </source>
</evidence>
<proteinExistence type="inferred from homology"/>
<protein>
    <recommendedName>
        <fullName evidence="1">UPF0434 protein Mmar10_2939</fullName>
    </recommendedName>
</protein>
<organism>
    <name type="scientific">Maricaulis maris (strain MCS10)</name>
    <name type="common">Caulobacter maris</name>
    <dbReference type="NCBI Taxonomy" id="394221"/>
    <lineage>
        <taxon>Bacteria</taxon>
        <taxon>Pseudomonadati</taxon>
        <taxon>Pseudomonadota</taxon>
        <taxon>Alphaproteobacteria</taxon>
        <taxon>Maricaulales</taxon>
        <taxon>Maricaulaceae</taxon>
        <taxon>Maricaulis</taxon>
    </lineage>
</organism>
<gene>
    <name type="ordered locus">Mmar10_2939</name>
</gene>
<keyword id="KW-1185">Reference proteome</keyword>